<comment type="function">
    <text evidence="1">Essential subunit of the Sec protein translocation channel SecYEG. Clamps together the 2 halves of SecY. May contact the channel plug during translocation.</text>
</comment>
<comment type="subunit">
    <text evidence="1">Component of the Sec protein translocase complex. Heterotrimer consisting of SecY (alpha), SecG (beta) and SecE (gamma) subunits. The heterotrimers can form oligomers, although 1 heterotrimer is thought to be able to translocate proteins. Interacts with the ribosome. May interact with SecDF, and other proteins may be involved.</text>
</comment>
<comment type="subcellular location">
    <subcellularLocation>
        <location evidence="1">Cell membrane</location>
        <topology evidence="1">Single-pass membrane protein</topology>
    </subcellularLocation>
</comment>
<comment type="similarity">
    <text evidence="1">Belongs to the SecE/SEC61-gamma family.</text>
</comment>
<sequence>MSSNKIINWFRRLREDWNRIITVARKPDRNFFSLNLKVTLLVLAVVGVLAYIIQLALTLIGV</sequence>
<gene>
    <name evidence="1" type="primary">secE</name>
    <name type="ordered locus">SSO5663</name>
</gene>
<protein>
    <recommendedName>
        <fullName evidence="1">Protein translocase subunit SecE</fullName>
    </recommendedName>
    <alternativeName>
        <fullName evidence="1">Protein transport protein Sec61 gamma subunit homolog</fullName>
    </alternativeName>
</protein>
<reference key="1">
    <citation type="journal article" date="2001" name="Proc. Natl. Acad. Sci. U.S.A.">
        <title>The complete genome of the crenarchaeon Sulfolobus solfataricus P2.</title>
        <authorList>
            <person name="She Q."/>
            <person name="Singh R.K."/>
            <person name="Confalonieri F."/>
            <person name="Zivanovic Y."/>
            <person name="Allard G."/>
            <person name="Awayez M.J."/>
            <person name="Chan-Weiher C.C.-Y."/>
            <person name="Clausen I.G."/>
            <person name="Curtis B.A."/>
            <person name="De Moors A."/>
            <person name="Erauso G."/>
            <person name="Fletcher C."/>
            <person name="Gordon P.M.K."/>
            <person name="Heikamp-de Jong I."/>
            <person name="Jeffries A.C."/>
            <person name="Kozera C.J."/>
            <person name="Medina N."/>
            <person name="Peng X."/>
            <person name="Thi-Ngoc H.P."/>
            <person name="Redder P."/>
            <person name="Schenk M.E."/>
            <person name="Theriault C."/>
            <person name="Tolstrup N."/>
            <person name="Charlebois R.L."/>
            <person name="Doolittle W.F."/>
            <person name="Duguet M."/>
            <person name="Gaasterland T."/>
            <person name="Garrett R.A."/>
            <person name="Ragan M.A."/>
            <person name="Sensen C.W."/>
            <person name="Van der Oost J."/>
        </authorList>
    </citation>
    <scope>NUCLEOTIDE SEQUENCE [LARGE SCALE GENOMIC DNA]</scope>
    <source>
        <strain>ATCC 35092 / DSM 1617 / JCM 11322 / P2</strain>
    </source>
</reference>
<evidence type="ECO:0000255" key="1">
    <source>
        <dbReference type="HAMAP-Rule" id="MF_00422"/>
    </source>
</evidence>
<dbReference type="EMBL" id="AE006641">
    <property type="protein sequence ID" value="AAK40677.1"/>
    <property type="molecule type" value="Genomic_DNA"/>
</dbReference>
<dbReference type="PIR" id="F90177">
    <property type="entry name" value="F90177"/>
</dbReference>
<dbReference type="RefSeq" id="WP_009990639.1">
    <property type="nucleotide sequence ID" value="NC_002754.1"/>
</dbReference>
<dbReference type="SMR" id="P58191"/>
<dbReference type="STRING" id="273057.SSO5663"/>
<dbReference type="PaxDb" id="273057-SSO5663"/>
<dbReference type="EnsemblBacteria" id="AAK40677">
    <property type="protein sequence ID" value="AAK40677"/>
    <property type="gene ID" value="SSO5663"/>
</dbReference>
<dbReference type="KEGG" id="sso:SSO5663"/>
<dbReference type="PATRIC" id="fig|273057.12.peg.338"/>
<dbReference type="eggNOG" id="arCOG02204">
    <property type="taxonomic scope" value="Archaea"/>
</dbReference>
<dbReference type="HOGENOM" id="CLU_191921_1_0_2"/>
<dbReference type="InParanoid" id="P58191"/>
<dbReference type="Proteomes" id="UP000001974">
    <property type="component" value="Chromosome"/>
</dbReference>
<dbReference type="GO" id="GO:0005886">
    <property type="term" value="C:plasma membrane"/>
    <property type="evidence" value="ECO:0007669"/>
    <property type="project" value="UniProtKB-SubCell"/>
</dbReference>
<dbReference type="GO" id="GO:0008320">
    <property type="term" value="F:protein transmembrane transporter activity"/>
    <property type="evidence" value="ECO:0007669"/>
    <property type="project" value="UniProtKB-UniRule"/>
</dbReference>
<dbReference type="GO" id="GO:0065002">
    <property type="term" value="P:intracellular protein transmembrane transport"/>
    <property type="evidence" value="ECO:0007669"/>
    <property type="project" value="UniProtKB-UniRule"/>
</dbReference>
<dbReference type="GO" id="GO:0009306">
    <property type="term" value="P:protein secretion"/>
    <property type="evidence" value="ECO:0007669"/>
    <property type="project" value="UniProtKB-UniRule"/>
</dbReference>
<dbReference type="GO" id="GO:0006605">
    <property type="term" value="P:protein targeting"/>
    <property type="evidence" value="ECO:0007669"/>
    <property type="project" value="UniProtKB-UniRule"/>
</dbReference>
<dbReference type="Gene3D" id="1.20.5.820">
    <property type="entry name" value="Preprotein translocase SecE subunit"/>
    <property type="match status" value="1"/>
</dbReference>
<dbReference type="HAMAP" id="MF_00422">
    <property type="entry name" value="SecE"/>
    <property type="match status" value="1"/>
</dbReference>
<dbReference type="InterPro" id="IPR023391">
    <property type="entry name" value="Prot_translocase_SecE_dom_sf"/>
</dbReference>
<dbReference type="InterPro" id="IPR008158">
    <property type="entry name" value="Translocase_Sec61-g"/>
</dbReference>
<dbReference type="InterPro" id="IPR001901">
    <property type="entry name" value="Translocase_SecE/Sec61-g"/>
</dbReference>
<dbReference type="NCBIfam" id="NF006906">
    <property type="entry name" value="PRK09400.1-1"/>
    <property type="match status" value="1"/>
</dbReference>
<dbReference type="NCBIfam" id="TIGR00327">
    <property type="entry name" value="secE_euk_arch"/>
    <property type="match status" value="1"/>
</dbReference>
<dbReference type="SUPFAM" id="SSF103456">
    <property type="entry name" value="Preprotein translocase SecE subunit"/>
    <property type="match status" value="1"/>
</dbReference>
<organism>
    <name type="scientific">Saccharolobus solfataricus (strain ATCC 35092 / DSM 1617 / JCM 11322 / P2)</name>
    <name type="common">Sulfolobus solfataricus</name>
    <dbReference type="NCBI Taxonomy" id="273057"/>
    <lineage>
        <taxon>Archaea</taxon>
        <taxon>Thermoproteota</taxon>
        <taxon>Thermoprotei</taxon>
        <taxon>Sulfolobales</taxon>
        <taxon>Sulfolobaceae</taxon>
        <taxon>Saccharolobus</taxon>
    </lineage>
</organism>
<feature type="chain" id="PRO_0000104229" description="Protein translocase subunit SecE">
    <location>
        <begin position="1"/>
        <end position="62"/>
    </location>
</feature>
<feature type="transmembrane region" description="Helical" evidence="1">
    <location>
        <begin position="40"/>
        <end position="60"/>
    </location>
</feature>
<proteinExistence type="inferred from homology"/>
<accession>P58191</accession>
<keyword id="KW-1003">Cell membrane</keyword>
<keyword id="KW-0472">Membrane</keyword>
<keyword id="KW-0653">Protein transport</keyword>
<keyword id="KW-1185">Reference proteome</keyword>
<keyword id="KW-0811">Translocation</keyword>
<keyword id="KW-0812">Transmembrane</keyword>
<keyword id="KW-1133">Transmembrane helix</keyword>
<keyword id="KW-0813">Transport</keyword>
<name>SECE_SACS2</name>